<sequence length="67" mass="7348">MGKVFFFVLMIAIIGSTFLIEEALGSLVGCPRPDFLPSWNRCKSCVCKNNKLKCPKILKGSLLKTAA</sequence>
<comment type="subunit">
    <text evidence="1">Homodimer; disulfide-linked.</text>
</comment>
<comment type="subcellular location">
    <subcellularLocation>
        <location evidence="1">Secreted</location>
    </subcellularLocation>
</comment>
<comment type="tissue specificity">
    <text evidence="4">Expressed by the venom gland.</text>
</comment>
<comment type="PTM">
    <text evidence="3">Contains 2 intrachain disulfide bonds (one per chain) and 1 interchain disulfide bond.</text>
</comment>
<comment type="similarity">
    <text evidence="3">Belongs to the ant myrmeciitoxin-01 family.</text>
</comment>
<comment type="online information" name="National Center for Biotechnology Information (NCBI)">
    <link uri="https://www.ncbi.nlm.nih.gov/nuccore/GGFG01000004"/>
</comment>
<feature type="signal peptide" evidence="1">
    <location>
        <begin position="1"/>
        <end position="25"/>
    </location>
</feature>
<feature type="chain" id="PRO_0000447072" description="U-myrmeciitoxin(01)-Mg4a" evidence="1">
    <location>
        <begin position="26"/>
        <end position="67"/>
    </location>
</feature>
<proteinExistence type="evidence at protein level"/>
<keyword id="KW-1015">Disulfide bond</keyword>
<keyword id="KW-0964">Secreted</keyword>
<keyword id="KW-0732">Signal</keyword>
<keyword id="KW-0800">Toxin</keyword>
<organism>
    <name type="scientific">Myrmecia gulosa</name>
    <name type="common">Red bulldog ant</name>
    <dbReference type="NCBI Taxonomy" id="36170"/>
    <lineage>
        <taxon>Eukaryota</taxon>
        <taxon>Metazoa</taxon>
        <taxon>Ecdysozoa</taxon>
        <taxon>Arthropoda</taxon>
        <taxon>Hexapoda</taxon>
        <taxon>Insecta</taxon>
        <taxon>Pterygota</taxon>
        <taxon>Neoptera</taxon>
        <taxon>Endopterygota</taxon>
        <taxon>Hymenoptera</taxon>
        <taxon>Apocrita</taxon>
        <taxon>Aculeata</taxon>
        <taxon>Formicoidea</taxon>
        <taxon>Formicidae</taxon>
        <taxon>Myrmeciinae</taxon>
        <taxon>Myrmeciini</taxon>
        <taxon>Myrmecia</taxon>
    </lineage>
</organism>
<dbReference type="SMR" id="P0DPU9"/>
<dbReference type="GO" id="GO:0005576">
    <property type="term" value="C:extracellular region"/>
    <property type="evidence" value="ECO:0007669"/>
    <property type="project" value="UniProtKB-SubCell"/>
</dbReference>
<dbReference type="GO" id="GO:0090729">
    <property type="term" value="F:toxin activity"/>
    <property type="evidence" value="ECO:0007669"/>
    <property type="project" value="UniProtKB-KW"/>
</dbReference>
<name>TX14A_MYRGU</name>
<accession>P0DPU9</accession>
<protein>
    <recommendedName>
        <fullName evidence="3">U-myrmeciitoxin(01)-Mg4a</fullName>
        <shortName evidence="2">MIITX(01)-Mg4a</shortName>
        <shortName evidence="3">U-MIITX(01)-Mg4a</shortName>
    </recommendedName>
</protein>
<evidence type="ECO:0000269" key="1">
    <source>
    </source>
</evidence>
<evidence type="ECO:0000303" key="2">
    <source>
    </source>
</evidence>
<evidence type="ECO:0000305" key="3"/>
<evidence type="ECO:0000305" key="4">
    <source>
    </source>
</evidence>
<reference key="1">
    <citation type="journal article" date="2018" name="Sci. Adv.">
        <title>A comprehensive portrait of the venom of the giant red bull ant, Myrmecia gulosa, reveals a hyperdiverse hymenopteran toxin gene family.</title>
        <authorList>
            <person name="Robinson S.D."/>
            <person name="Mueller A."/>
            <person name="Clayton D."/>
            <person name="Starobova H."/>
            <person name="Hamilton B.R."/>
            <person name="Payne R.J."/>
            <person name="Vetter I."/>
            <person name="King G.F."/>
            <person name="Undheim E.A.B."/>
        </authorList>
    </citation>
    <scope>NUCLEOTIDE SEQUENCE [MRNA]</scope>
    <scope>SUBCELLULAR LOCATION</scope>
    <scope>SUBUNIT</scope>
    <source>
        <tissue>Venom</tissue>
        <tissue>Venom gland</tissue>
    </source>
</reference>